<evidence type="ECO:0000255" key="1">
    <source>
        <dbReference type="HAMAP-Rule" id="MF_01953"/>
    </source>
</evidence>
<organism>
    <name type="scientific">Delftia acidovorans (strain DSM 14801 / SPH-1)</name>
    <dbReference type="NCBI Taxonomy" id="398578"/>
    <lineage>
        <taxon>Bacteria</taxon>
        <taxon>Pseudomonadati</taxon>
        <taxon>Pseudomonadota</taxon>
        <taxon>Betaproteobacteria</taxon>
        <taxon>Burkholderiales</taxon>
        <taxon>Comamonadaceae</taxon>
        <taxon>Delftia</taxon>
    </lineage>
</organism>
<reference key="1">
    <citation type="submission" date="2007-11" db="EMBL/GenBank/DDBJ databases">
        <title>Complete sequence of Delftia acidovorans DSM 14801 / SPH-1.</title>
        <authorList>
            <person name="Copeland A."/>
            <person name="Lucas S."/>
            <person name="Lapidus A."/>
            <person name="Barry K."/>
            <person name="Glavina del Rio T."/>
            <person name="Dalin E."/>
            <person name="Tice H."/>
            <person name="Pitluck S."/>
            <person name="Lowry S."/>
            <person name="Clum A."/>
            <person name="Schmutz J."/>
            <person name="Larimer F."/>
            <person name="Land M."/>
            <person name="Hauser L."/>
            <person name="Kyrpides N."/>
            <person name="Kim E."/>
            <person name="Schleheck D."/>
            <person name="Richardson P."/>
        </authorList>
    </citation>
    <scope>NUCLEOTIDE SEQUENCE [LARGE SCALE GENOMIC DNA]</scope>
    <source>
        <strain>DSM 14801 / SPH-1</strain>
    </source>
</reference>
<protein>
    <recommendedName>
        <fullName evidence="1">Urease subunit alpha</fullName>
        <ecNumber evidence="1">3.5.1.5</ecNumber>
    </recommendedName>
    <alternativeName>
        <fullName evidence="1">Urea amidohydrolase subunit alpha</fullName>
    </alternativeName>
</protein>
<feature type="chain" id="PRO_1000188871" description="Urease subunit alpha">
    <location>
        <begin position="1"/>
        <end position="567"/>
    </location>
</feature>
<feature type="domain" description="Urease" evidence="1">
    <location>
        <begin position="129"/>
        <end position="567"/>
    </location>
</feature>
<feature type="active site" description="Proton donor" evidence="1">
    <location>
        <position position="320"/>
    </location>
</feature>
<feature type="binding site" evidence="1">
    <location>
        <position position="134"/>
    </location>
    <ligand>
        <name>Ni(2+)</name>
        <dbReference type="ChEBI" id="CHEBI:49786"/>
        <label>1</label>
    </ligand>
</feature>
<feature type="binding site" evidence="1">
    <location>
        <position position="136"/>
    </location>
    <ligand>
        <name>Ni(2+)</name>
        <dbReference type="ChEBI" id="CHEBI:49786"/>
        <label>1</label>
    </ligand>
</feature>
<feature type="binding site" description="via carbamate group" evidence="1">
    <location>
        <position position="217"/>
    </location>
    <ligand>
        <name>Ni(2+)</name>
        <dbReference type="ChEBI" id="CHEBI:49786"/>
        <label>1</label>
    </ligand>
</feature>
<feature type="binding site" description="via carbamate group" evidence="1">
    <location>
        <position position="217"/>
    </location>
    <ligand>
        <name>Ni(2+)</name>
        <dbReference type="ChEBI" id="CHEBI:49786"/>
        <label>2</label>
    </ligand>
</feature>
<feature type="binding site" evidence="1">
    <location>
        <position position="219"/>
    </location>
    <ligand>
        <name>substrate</name>
    </ligand>
</feature>
<feature type="binding site" evidence="1">
    <location>
        <position position="246"/>
    </location>
    <ligand>
        <name>Ni(2+)</name>
        <dbReference type="ChEBI" id="CHEBI:49786"/>
        <label>2</label>
    </ligand>
</feature>
<feature type="binding site" evidence="1">
    <location>
        <position position="272"/>
    </location>
    <ligand>
        <name>Ni(2+)</name>
        <dbReference type="ChEBI" id="CHEBI:49786"/>
        <label>2</label>
    </ligand>
</feature>
<feature type="binding site" evidence="1">
    <location>
        <position position="360"/>
    </location>
    <ligand>
        <name>Ni(2+)</name>
        <dbReference type="ChEBI" id="CHEBI:49786"/>
        <label>1</label>
    </ligand>
</feature>
<feature type="modified residue" description="N6-carboxylysine" evidence="1">
    <location>
        <position position="217"/>
    </location>
</feature>
<keyword id="KW-0963">Cytoplasm</keyword>
<keyword id="KW-0378">Hydrolase</keyword>
<keyword id="KW-0479">Metal-binding</keyword>
<keyword id="KW-0533">Nickel</keyword>
<keyword id="KW-1185">Reference proteome</keyword>
<sequence length="567" mass="60259">MASITRQAYAEMFGPTVGDRLRLADTALVIEIEKDHTIYGEEVKFGGGKVIRDGMGQSQRMAADCADTVITNAVIIDHWGIVKADIAIKNGLIAGIGKAGNPDMQPGVTIVIGPGTEIIAGEGMIVTAGGIDTHIHFICPQQIDEALTSGVTTMIGGGTGPATGTFATTVTPGPWHMERMLQAVDGYPMNIGLLGKGNASQAAPLREQIAAGAIGLKLHEDWGSTPAAIDCCLGVADETDTQVAIHTDTLNEGGFVEATVAAFKGRTIHTYHTEGAGGGHAPDIIKVCGEANVLPSSTNPTRPYTVNTLDEHLDMLMVCHHLDASIAEDIAFAESRIRRETIAAEDVLHDLGAFSMISSDSQAMGRVGEVVLRTWQTAHKMKVQRGSLPGDNARHDNFRVKRYVAKYTINPARTHGIAHVVGSVEVGKLADLVLWRPAFFGVKPSLILKGGSIASAAMGDPNASIPTPQPVHYRPMFAGQGSGVAAASLTFVSQAAQQAGVADRYGLRKRTVAVENCRSVSKRDMVHNDWQPDISVDPETYQVVADGQLLTCEPATELPMAQRYFLF</sequence>
<accession>A9BUC4</accession>
<name>URE1_DELAS</name>
<comment type="catalytic activity">
    <reaction evidence="1">
        <text>urea + 2 H2O + H(+) = hydrogencarbonate + 2 NH4(+)</text>
        <dbReference type="Rhea" id="RHEA:20557"/>
        <dbReference type="ChEBI" id="CHEBI:15377"/>
        <dbReference type="ChEBI" id="CHEBI:15378"/>
        <dbReference type="ChEBI" id="CHEBI:16199"/>
        <dbReference type="ChEBI" id="CHEBI:17544"/>
        <dbReference type="ChEBI" id="CHEBI:28938"/>
        <dbReference type="EC" id="3.5.1.5"/>
    </reaction>
</comment>
<comment type="cofactor">
    <cofactor evidence="1">
        <name>Ni cation</name>
        <dbReference type="ChEBI" id="CHEBI:25516"/>
    </cofactor>
    <text evidence="1">Binds 2 nickel ions per subunit.</text>
</comment>
<comment type="pathway">
    <text evidence="1">Nitrogen metabolism; urea degradation; CO(2) and NH(3) from urea (urease route): step 1/1.</text>
</comment>
<comment type="subunit">
    <text evidence="1">Heterotrimer of UreA (gamma), UreB (beta) and UreC (alpha) subunits. Three heterotrimers associate to form the active enzyme.</text>
</comment>
<comment type="subcellular location">
    <subcellularLocation>
        <location evidence="1">Cytoplasm</location>
    </subcellularLocation>
</comment>
<comment type="PTM">
    <text evidence="1">Carboxylation allows a single lysine to coordinate two nickel ions.</text>
</comment>
<comment type="similarity">
    <text evidence="1">Belongs to the metallo-dependent hydrolases superfamily. Urease alpha subunit family.</text>
</comment>
<proteinExistence type="inferred from homology"/>
<gene>
    <name evidence="1" type="primary">ureC</name>
    <name type="ordered locus">Daci_1182</name>
</gene>
<dbReference type="EC" id="3.5.1.5" evidence="1"/>
<dbReference type="EMBL" id="CP000884">
    <property type="protein sequence ID" value="ABX33827.1"/>
    <property type="molecule type" value="Genomic_DNA"/>
</dbReference>
<dbReference type="RefSeq" id="WP_012203113.1">
    <property type="nucleotide sequence ID" value="NC_010002.1"/>
</dbReference>
<dbReference type="SMR" id="A9BUC4"/>
<dbReference type="STRING" id="398578.Daci_1182"/>
<dbReference type="GeneID" id="24115756"/>
<dbReference type="KEGG" id="dac:Daci_1182"/>
<dbReference type="eggNOG" id="COG0804">
    <property type="taxonomic scope" value="Bacteria"/>
</dbReference>
<dbReference type="HOGENOM" id="CLU_000980_0_0_4"/>
<dbReference type="UniPathway" id="UPA00258">
    <property type="reaction ID" value="UER00370"/>
</dbReference>
<dbReference type="Proteomes" id="UP000000784">
    <property type="component" value="Chromosome"/>
</dbReference>
<dbReference type="GO" id="GO:0005737">
    <property type="term" value="C:cytoplasm"/>
    <property type="evidence" value="ECO:0007669"/>
    <property type="project" value="UniProtKB-SubCell"/>
</dbReference>
<dbReference type="GO" id="GO:0016151">
    <property type="term" value="F:nickel cation binding"/>
    <property type="evidence" value="ECO:0007669"/>
    <property type="project" value="UniProtKB-UniRule"/>
</dbReference>
<dbReference type="GO" id="GO:0009039">
    <property type="term" value="F:urease activity"/>
    <property type="evidence" value="ECO:0007669"/>
    <property type="project" value="UniProtKB-UniRule"/>
</dbReference>
<dbReference type="GO" id="GO:0043419">
    <property type="term" value="P:urea catabolic process"/>
    <property type="evidence" value="ECO:0007669"/>
    <property type="project" value="UniProtKB-UniRule"/>
</dbReference>
<dbReference type="CDD" id="cd00375">
    <property type="entry name" value="Urease_alpha"/>
    <property type="match status" value="1"/>
</dbReference>
<dbReference type="Gene3D" id="3.20.20.140">
    <property type="entry name" value="Metal-dependent hydrolases"/>
    <property type="match status" value="1"/>
</dbReference>
<dbReference type="Gene3D" id="2.30.40.10">
    <property type="entry name" value="Urease, subunit C, domain 1"/>
    <property type="match status" value="1"/>
</dbReference>
<dbReference type="HAMAP" id="MF_01953">
    <property type="entry name" value="Urease_alpha"/>
    <property type="match status" value="1"/>
</dbReference>
<dbReference type="InterPro" id="IPR006680">
    <property type="entry name" value="Amidohydro-rel"/>
</dbReference>
<dbReference type="InterPro" id="IPR011059">
    <property type="entry name" value="Metal-dep_hydrolase_composite"/>
</dbReference>
<dbReference type="InterPro" id="IPR032466">
    <property type="entry name" value="Metal_Hydrolase"/>
</dbReference>
<dbReference type="InterPro" id="IPR011612">
    <property type="entry name" value="Urease_alpha_N_dom"/>
</dbReference>
<dbReference type="InterPro" id="IPR050112">
    <property type="entry name" value="Urease_alpha_subunit"/>
</dbReference>
<dbReference type="InterPro" id="IPR017950">
    <property type="entry name" value="Urease_AS"/>
</dbReference>
<dbReference type="InterPro" id="IPR005848">
    <property type="entry name" value="Urease_asu"/>
</dbReference>
<dbReference type="InterPro" id="IPR017951">
    <property type="entry name" value="Urease_asu_c"/>
</dbReference>
<dbReference type="InterPro" id="IPR029754">
    <property type="entry name" value="Urease_Ni-bd"/>
</dbReference>
<dbReference type="NCBIfam" id="NF009685">
    <property type="entry name" value="PRK13206.1"/>
    <property type="match status" value="1"/>
</dbReference>
<dbReference type="NCBIfam" id="NF009686">
    <property type="entry name" value="PRK13207.1"/>
    <property type="match status" value="1"/>
</dbReference>
<dbReference type="NCBIfam" id="TIGR01792">
    <property type="entry name" value="urease_alph"/>
    <property type="match status" value="1"/>
</dbReference>
<dbReference type="PANTHER" id="PTHR43440">
    <property type="entry name" value="UREASE"/>
    <property type="match status" value="1"/>
</dbReference>
<dbReference type="PANTHER" id="PTHR43440:SF1">
    <property type="entry name" value="UREASE"/>
    <property type="match status" value="1"/>
</dbReference>
<dbReference type="Pfam" id="PF01979">
    <property type="entry name" value="Amidohydro_1"/>
    <property type="match status" value="1"/>
</dbReference>
<dbReference type="Pfam" id="PF00449">
    <property type="entry name" value="Urease_alpha"/>
    <property type="match status" value="1"/>
</dbReference>
<dbReference type="PRINTS" id="PR01752">
    <property type="entry name" value="UREASE"/>
</dbReference>
<dbReference type="SUPFAM" id="SSF51338">
    <property type="entry name" value="Composite domain of metallo-dependent hydrolases"/>
    <property type="match status" value="1"/>
</dbReference>
<dbReference type="SUPFAM" id="SSF51556">
    <property type="entry name" value="Metallo-dependent hydrolases"/>
    <property type="match status" value="1"/>
</dbReference>
<dbReference type="PROSITE" id="PS01120">
    <property type="entry name" value="UREASE_1"/>
    <property type="match status" value="1"/>
</dbReference>
<dbReference type="PROSITE" id="PS00145">
    <property type="entry name" value="UREASE_2"/>
    <property type="match status" value="1"/>
</dbReference>
<dbReference type="PROSITE" id="PS51368">
    <property type="entry name" value="UREASE_3"/>
    <property type="match status" value="1"/>
</dbReference>